<accession>Q5L046</accession>
<comment type="similarity">
    <text evidence="1">Belongs to the UPF0145 family.</text>
</comment>
<feature type="chain" id="PRO_0000225827" description="UPF0145 protein GK1405">
    <location>
        <begin position="1"/>
        <end position="105"/>
    </location>
</feature>
<organism>
    <name type="scientific">Geobacillus kaustophilus (strain HTA426)</name>
    <dbReference type="NCBI Taxonomy" id="235909"/>
    <lineage>
        <taxon>Bacteria</taxon>
        <taxon>Bacillati</taxon>
        <taxon>Bacillota</taxon>
        <taxon>Bacilli</taxon>
        <taxon>Bacillales</taxon>
        <taxon>Anoxybacillaceae</taxon>
        <taxon>Geobacillus</taxon>
        <taxon>Geobacillus thermoleovorans group</taxon>
    </lineage>
</organism>
<sequence length="105" mass="11213">MIVTTTNTIEGKEIEEYLGIVAGEVILGANVVRDFLASITDIIGGRSGTYESKLAEGREMAIKEMVNKARSLGANAVIGVDLDFETLRDGMMMCIATGTAVRLKS</sequence>
<dbReference type="EMBL" id="BA000043">
    <property type="protein sequence ID" value="BAD75690.1"/>
    <property type="molecule type" value="Genomic_DNA"/>
</dbReference>
<dbReference type="RefSeq" id="WP_011230901.1">
    <property type="nucleotide sequence ID" value="NC_006510.1"/>
</dbReference>
<dbReference type="SMR" id="Q5L046"/>
<dbReference type="STRING" id="235909.GK1405"/>
<dbReference type="KEGG" id="gka:GK1405"/>
<dbReference type="eggNOG" id="COG0393">
    <property type="taxonomic scope" value="Bacteria"/>
</dbReference>
<dbReference type="HOGENOM" id="CLU_117144_3_2_9"/>
<dbReference type="Proteomes" id="UP000001172">
    <property type="component" value="Chromosome"/>
</dbReference>
<dbReference type="Gene3D" id="3.30.110.70">
    <property type="entry name" value="Hypothetical protein apc22750. Chain B"/>
    <property type="match status" value="1"/>
</dbReference>
<dbReference type="HAMAP" id="MF_00338">
    <property type="entry name" value="UPF0145"/>
    <property type="match status" value="1"/>
</dbReference>
<dbReference type="InterPro" id="IPR035439">
    <property type="entry name" value="UPF0145_dom_sf"/>
</dbReference>
<dbReference type="InterPro" id="IPR002765">
    <property type="entry name" value="UPF0145_YbjQ-like"/>
</dbReference>
<dbReference type="PANTHER" id="PTHR34068">
    <property type="entry name" value="UPF0145 PROTEIN YBJQ"/>
    <property type="match status" value="1"/>
</dbReference>
<dbReference type="PANTHER" id="PTHR34068:SF1">
    <property type="entry name" value="UPF0145 PROTEIN YBJQ"/>
    <property type="match status" value="1"/>
</dbReference>
<dbReference type="Pfam" id="PF01906">
    <property type="entry name" value="YbjQ_1"/>
    <property type="match status" value="1"/>
</dbReference>
<dbReference type="SUPFAM" id="SSF117782">
    <property type="entry name" value="YbjQ-like"/>
    <property type="match status" value="1"/>
</dbReference>
<gene>
    <name type="ordered locus">GK1405</name>
</gene>
<name>Y1405_GEOKA</name>
<proteinExistence type="inferred from homology"/>
<protein>
    <recommendedName>
        <fullName evidence="1">UPF0145 protein GK1405</fullName>
    </recommendedName>
</protein>
<keyword id="KW-1185">Reference proteome</keyword>
<reference key="1">
    <citation type="journal article" date="2004" name="Nucleic Acids Res.">
        <title>Thermoadaptation trait revealed by the genome sequence of thermophilic Geobacillus kaustophilus.</title>
        <authorList>
            <person name="Takami H."/>
            <person name="Takaki Y."/>
            <person name="Chee G.-J."/>
            <person name="Nishi S."/>
            <person name="Shimamura S."/>
            <person name="Suzuki H."/>
            <person name="Matsui S."/>
            <person name="Uchiyama I."/>
        </authorList>
    </citation>
    <scope>NUCLEOTIDE SEQUENCE [LARGE SCALE GENOMIC DNA]</scope>
    <source>
        <strain>HTA426</strain>
    </source>
</reference>
<evidence type="ECO:0000255" key="1">
    <source>
        <dbReference type="HAMAP-Rule" id="MF_00338"/>
    </source>
</evidence>